<organism>
    <name type="scientific">Escherichia coli O1:K1 / APEC</name>
    <dbReference type="NCBI Taxonomy" id="405955"/>
    <lineage>
        <taxon>Bacteria</taxon>
        <taxon>Pseudomonadati</taxon>
        <taxon>Pseudomonadota</taxon>
        <taxon>Gammaproteobacteria</taxon>
        <taxon>Enterobacterales</taxon>
        <taxon>Enterobacteriaceae</taxon>
        <taxon>Escherichia</taxon>
    </lineage>
</organism>
<gene>
    <name evidence="1" type="primary">atpG</name>
    <name type="ordered locus">Ecok1_37110</name>
    <name type="ORF">APECO1_2728</name>
</gene>
<dbReference type="EMBL" id="CP000468">
    <property type="protein sequence ID" value="ABJ03205.1"/>
    <property type="molecule type" value="Genomic_DNA"/>
</dbReference>
<dbReference type="RefSeq" id="WP_000896498.1">
    <property type="nucleotide sequence ID" value="NZ_CADILS010000011.1"/>
</dbReference>
<dbReference type="SMR" id="A1AHR5"/>
<dbReference type="GeneID" id="93778234"/>
<dbReference type="KEGG" id="ecv:APECO1_2728"/>
<dbReference type="HOGENOM" id="CLU_050669_0_1_6"/>
<dbReference type="Proteomes" id="UP000008216">
    <property type="component" value="Chromosome"/>
</dbReference>
<dbReference type="GO" id="GO:0005886">
    <property type="term" value="C:plasma membrane"/>
    <property type="evidence" value="ECO:0007669"/>
    <property type="project" value="UniProtKB-SubCell"/>
</dbReference>
<dbReference type="GO" id="GO:0045259">
    <property type="term" value="C:proton-transporting ATP synthase complex"/>
    <property type="evidence" value="ECO:0007669"/>
    <property type="project" value="UniProtKB-KW"/>
</dbReference>
<dbReference type="GO" id="GO:0005524">
    <property type="term" value="F:ATP binding"/>
    <property type="evidence" value="ECO:0007669"/>
    <property type="project" value="UniProtKB-UniRule"/>
</dbReference>
<dbReference type="GO" id="GO:0046933">
    <property type="term" value="F:proton-transporting ATP synthase activity, rotational mechanism"/>
    <property type="evidence" value="ECO:0007669"/>
    <property type="project" value="UniProtKB-UniRule"/>
</dbReference>
<dbReference type="GO" id="GO:0042777">
    <property type="term" value="P:proton motive force-driven plasma membrane ATP synthesis"/>
    <property type="evidence" value="ECO:0007669"/>
    <property type="project" value="UniProtKB-UniRule"/>
</dbReference>
<dbReference type="CDD" id="cd12151">
    <property type="entry name" value="F1-ATPase_gamma"/>
    <property type="match status" value="1"/>
</dbReference>
<dbReference type="FunFam" id="1.10.287.80:FF:000005">
    <property type="entry name" value="ATP synthase gamma chain"/>
    <property type="match status" value="2"/>
</dbReference>
<dbReference type="FunFam" id="3.40.1380.10:FF:000001">
    <property type="entry name" value="ATP synthase gamma chain"/>
    <property type="match status" value="1"/>
</dbReference>
<dbReference type="Gene3D" id="3.40.1380.10">
    <property type="match status" value="1"/>
</dbReference>
<dbReference type="Gene3D" id="1.10.287.80">
    <property type="entry name" value="ATP synthase, gamma subunit, helix hairpin domain"/>
    <property type="match status" value="1"/>
</dbReference>
<dbReference type="HAMAP" id="MF_00815">
    <property type="entry name" value="ATP_synth_gamma_bact"/>
    <property type="match status" value="1"/>
</dbReference>
<dbReference type="InterPro" id="IPR035968">
    <property type="entry name" value="ATP_synth_F1_ATPase_gsu"/>
</dbReference>
<dbReference type="InterPro" id="IPR000131">
    <property type="entry name" value="ATP_synth_F1_gsu"/>
</dbReference>
<dbReference type="InterPro" id="IPR023632">
    <property type="entry name" value="ATP_synth_F1_gsu_CS"/>
</dbReference>
<dbReference type="NCBIfam" id="TIGR01146">
    <property type="entry name" value="ATPsyn_F1gamma"/>
    <property type="match status" value="1"/>
</dbReference>
<dbReference type="NCBIfam" id="NF004144">
    <property type="entry name" value="PRK05621.1-1"/>
    <property type="match status" value="1"/>
</dbReference>
<dbReference type="PANTHER" id="PTHR11693">
    <property type="entry name" value="ATP SYNTHASE GAMMA CHAIN"/>
    <property type="match status" value="1"/>
</dbReference>
<dbReference type="PANTHER" id="PTHR11693:SF22">
    <property type="entry name" value="ATP SYNTHASE SUBUNIT GAMMA, MITOCHONDRIAL"/>
    <property type="match status" value="1"/>
</dbReference>
<dbReference type="Pfam" id="PF00231">
    <property type="entry name" value="ATP-synt"/>
    <property type="match status" value="1"/>
</dbReference>
<dbReference type="PRINTS" id="PR00126">
    <property type="entry name" value="ATPASEGAMMA"/>
</dbReference>
<dbReference type="SUPFAM" id="SSF52943">
    <property type="entry name" value="ATP synthase (F1-ATPase), gamma subunit"/>
    <property type="match status" value="1"/>
</dbReference>
<dbReference type="PROSITE" id="PS00153">
    <property type="entry name" value="ATPASE_GAMMA"/>
    <property type="match status" value="1"/>
</dbReference>
<accession>A1AHR5</accession>
<sequence length="287" mass="31577">MAGAKEIRSKIASVQNTQKITKAMEMVAASKMRKSQDRMAASRPYAETMRKVIGHLAHGNLEYKHPYLEDRDVKRVGYLVVSTDRGLCGGLNINLFKKLLAEMKTWTDKGVQCDLAMIGSKGVSFFNSVGGNVVAQVTGMGDNPSLSELIGPVKVMLQAYDEGRLDKLYIVSNKFINTMSQVPTISQLLPLPASDDDDLKHKSWDYLYEPDPKALLDTLLRRYVESQVYQGVVENLASEQAARMVAMKAATDNGGSLIKELQLVYNKARQASITQELTEIVSGAAAV</sequence>
<keyword id="KW-0066">ATP synthesis</keyword>
<keyword id="KW-0997">Cell inner membrane</keyword>
<keyword id="KW-1003">Cell membrane</keyword>
<keyword id="KW-0139">CF(1)</keyword>
<keyword id="KW-0375">Hydrogen ion transport</keyword>
<keyword id="KW-0406">Ion transport</keyword>
<keyword id="KW-0472">Membrane</keyword>
<keyword id="KW-1185">Reference proteome</keyword>
<keyword id="KW-0813">Transport</keyword>
<protein>
    <recommendedName>
        <fullName evidence="1">ATP synthase gamma chain</fullName>
    </recommendedName>
    <alternativeName>
        <fullName evidence="1">ATP synthase F1 sector gamma subunit</fullName>
    </alternativeName>
    <alternativeName>
        <fullName evidence="1">F-ATPase gamma subunit</fullName>
    </alternativeName>
</protein>
<proteinExistence type="inferred from homology"/>
<comment type="function">
    <text evidence="1">Produces ATP from ADP in the presence of a proton gradient across the membrane. The gamma chain is believed to be important in regulating ATPase activity and the flow of protons through the CF(0) complex.</text>
</comment>
<comment type="subunit">
    <text evidence="1">F-type ATPases have 2 components, CF(1) - the catalytic core - and CF(0) - the membrane proton channel. CF(1) has five subunits: alpha(3), beta(3), gamma(1), delta(1), epsilon(1). CF(0) has three main subunits: a, b and c.</text>
</comment>
<comment type="subcellular location">
    <subcellularLocation>
        <location evidence="1">Cell inner membrane</location>
        <topology evidence="1">Peripheral membrane protein</topology>
    </subcellularLocation>
</comment>
<comment type="similarity">
    <text evidence="1">Belongs to the ATPase gamma chain family.</text>
</comment>
<reference key="1">
    <citation type="journal article" date="2007" name="J. Bacteriol.">
        <title>The genome sequence of avian pathogenic Escherichia coli strain O1:K1:H7 shares strong similarities with human extraintestinal pathogenic E. coli genomes.</title>
        <authorList>
            <person name="Johnson T.J."/>
            <person name="Kariyawasam S."/>
            <person name="Wannemuehler Y."/>
            <person name="Mangiamele P."/>
            <person name="Johnson S.J."/>
            <person name="Doetkott C."/>
            <person name="Skyberg J.A."/>
            <person name="Lynne A.M."/>
            <person name="Johnson J.R."/>
            <person name="Nolan L.K."/>
        </authorList>
    </citation>
    <scope>NUCLEOTIDE SEQUENCE [LARGE SCALE GENOMIC DNA]</scope>
</reference>
<name>ATPG_ECOK1</name>
<evidence type="ECO:0000255" key="1">
    <source>
        <dbReference type="HAMAP-Rule" id="MF_00815"/>
    </source>
</evidence>
<feature type="chain" id="PRO_1000053203" description="ATP synthase gamma chain">
    <location>
        <begin position="1"/>
        <end position="287"/>
    </location>
</feature>